<name>YDGK_BACSU</name>
<proteinExistence type="inferred from homology"/>
<organism>
    <name type="scientific">Bacillus subtilis (strain 168)</name>
    <dbReference type="NCBI Taxonomy" id="224308"/>
    <lineage>
        <taxon>Bacteria</taxon>
        <taxon>Bacillati</taxon>
        <taxon>Bacillota</taxon>
        <taxon>Bacilli</taxon>
        <taxon>Bacillales</taxon>
        <taxon>Bacillaceae</taxon>
        <taxon>Bacillus</taxon>
    </lineage>
</organism>
<sequence length="402" mass="42681">MLHNPTGKERLALAFLLGMLAILGPLNIDMYLPSFPEIAKDLSASASLVQLSLTACLVGLTIGQLIVGPVSDAQGRRKPLLICIFLFALSSLFCALSPNITTLVAARFLQGFTASAGLVLSRAIVRDVFTGRELSKFFSLLMVITAVAPMVAPMTGGAILLLPFATWHTIFHVLMIIGFLLVLLIALRLKETLPLEKRIPSSIGTSVKTMGSLLKDRSFMGYALTVGFIHGGSFAYVSGTPFVYQDIYGVSPQVFSILFGINGLAIISGSFIIGRFGGIIHEKSLLRIAVITAMIATAVLLTMTMIHGPLATLVISIFIYMITIGMVLTSTFTLAMEKQGHRAGSASALLGMLPLLLGSIVSPLVGINETTAVPMGAIMFVTAVIGSLAFFGLTKERVGQNS</sequence>
<accession>P96709</accession>
<accession>Q797F0</accession>
<accession>Q79EN3</accession>
<comment type="subcellular location">
    <subcellularLocation>
        <location evidence="2">Cell membrane</location>
        <topology evidence="2">Multi-pass membrane protein</topology>
    </subcellularLocation>
</comment>
<comment type="similarity">
    <text evidence="2">Belongs to the major facilitator superfamily. Bcr/CmlA family.</text>
</comment>
<feature type="chain" id="PRO_0000359524" description="Uncharacterized MFS-type transporter YdgK">
    <location>
        <begin position="1"/>
        <end position="402"/>
    </location>
</feature>
<feature type="transmembrane region" description="Helical" evidence="1">
    <location>
        <begin position="11"/>
        <end position="31"/>
    </location>
</feature>
<feature type="transmembrane region" description="Helical" evidence="1">
    <location>
        <begin position="48"/>
        <end position="68"/>
    </location>
</feature>
<feature type="transmembrane region" description="Helical" evidence="1">
    <location>
        <begin position="80"/>
        <end position="100"/>
    </location>
</feature>
<feature type="transmembrane region" description="Helical" evidence="1">
    <location>
        <begin position="108"/>
        <end position="125"/>
    </location>
</feature>
<feature type="transmembrane region" description="Helical" evidence="1">
    <location>
        <begin position="140"/>
        <end position="160"/>
    </location>
</feature>
<feature type="transmembrane region" description="Helical" evidence="1">
    <location>
        <begin position="167"/>
        <end position="187"/>
    </location>
</feature>
<feature type="transmembrane region" description="Helical" evidence="1">
    <location>
        <begin position="219"/>
        <end position="239"/>
    </location>
</feature>
<feature type="transmembrane region" description="Helical" evidence="1">
    <location>
        <begin position="254"/>
        <end position="274"/>
    </location>
</feature>
<feature type="transmembrane region" description="Helical" evidence="1">
    <location>
        <begin position="286"/>
        <end position="306"/>
    </location>
</feature>
<feature type="transmembrane region" description="Helical" evidence="1">
    <location>
        <begin position="308"/>
        <end position="328"/>
    </location>
</feature>
<feature type="transmembrane region" description="Helical" evidence="1">
    <location>
        <begin position="347"/>
        <end position="367"/>
    </location>
</feature>
<feature type="transmembrane region" description="Helical" evidence="1">
    <location>
        <begin position="373"/>
        <end position="393"/>
    </location>
</feature>
<protein>
    <recommendedName>
        <fullName>Uncharacterized MFS-type transporter YdgK</fullName>
    </recommendedName>
</protein>
<dbReference type="EMBL" id="AB001488">
    <property type="protein sequence ID" value="BAA19401.1"/>
    <property type="molecule type" value="Genomic_DNA"/>
</dbReference>
<dbReference type="EMBL" id="AL009126">
    <property type="protein sequence ID" value="CAB12387.1"/>
    <property type="molecule type" value="Genomic_DNA"/>
</dbReference>
<dbReference type="EMBL" id="D88802">
    <property type="protein sequence ID" value="BAA19692.1"/>
    <property type="molecule type" value="Genomic_DNA"/>
</dbReference>
<dbReference type="PIR" id="E69783">
    <property type="entry name" value="E69783"/>
</dbReference>
<dbReference type="RefSeq" id="NP_388449.1">
    <property type="nucleotide sequence ID" value="NC_000964.3"/>
</dbReference>
<dbReference type="RefSeq" id="WP_003234132.1">
    <property type="nucleotide sequence ID" value="NZ_OZ025638.1"/>
</dbReference>
<dbReference type="SMR" id="P96709"/>
<dbReference type="FunCoup" id="P96709">
    <property type="interactions" value="515"/>
</dbReference>
<dbReference type="STRING" id="224308.BSU05680"/>
<dbReference type="PaxDb" id="224308-BSU05680"/>
<dbReference type="EnsemblBacteria" id="CAB12387">
    <property type="protein sequence ID" value="CAB12387"/>
    <property type="gene ID" value="BSU_05680"/>
</dbReference>
<dbReference type="GeneID" id="938060"/>
<dbReference type="KEGG" id="bsu:BSU05680"/>
<dbReference type="PATRIC" id="fig|224308.179.peg.611"/>
<dbReference type="eggNOG" id="COG2814">
    <property type="taxonomic scope" value="Bacteria"/>
</dbReference>
<dbReference type="InParanoid" id="P96709"/>
<dbReference type="OrthoDB" id="9800416at2"/>
<dbReference type="PhylomeDB" id="P96709"/>
<dbReference type="BioCyc" id="BSUB:BSU05680-MONOMER"/>
<dbReference type="PRO" id="PR:P96709"/>
<dbReference type="Proteomes" id="UP000001570">
    <property type="component" value="Chromosome"/>
</dbReference>
<dbReference type="GO" id="GO:0005886">
    <property type="term" value="C:plasma membrane"/>
    <property type="evidence" value="ECO:0000318"/>
    <property type="project" value="GO_Central"/>
</dbReference>
<dbReference type="GO" id="GO:0022857">
    <property type="term" value="F:transmembrane transporter activity"/>
    <property type="evidence" value="ECO:0000318"/>
    <property type="project" value="GO_Central"/>
</dbReference>
<dbReference type="GO" id="GO:0042910">
    <property type="term" value="F:xenobiotic transmembrane transporter activity"/>
    <property type="evidence" value="ECO:0007669"/>
    <property type="project" value="InterPro"/>
</dbReference>
<dbReference type="GO" id="GO:0055085">
    <property type="term" value="P:transmembrane transport"/>
    <property type="evidence" value="ECO:0000318"/>
    <property type="project" value="GO_Central"/>
</dbReference>
<dbReference type="GO" id="GO:1990961">
    <property type="term" value="P:xenobiotic detoxification by transmembrane export across the plasma membrane"/>
    <property type="evidence" value="ECO:0007669"/>
    <property type="project" value="InterPro"/>
</dbReference>
<dbReference type="CDD" id="cd17320">
    <property type="entry name" value="MFS_MdfA_MDR_like"/>
    <property type="match status" value="1"/>
</dbReference>
<dbReference type="FunFam" id="1.20.1720.10:FF:000005">
    <property type="entry name" value="Bcr/CflA family efflux transporter"/>
    <property type="match status" value="1"/>
</dbReference>
<dbReference type="Gene3D" id="1.20.1720.10">
    <property type="entry name" value="Multidrug resistance protein D"/>
    <property type="match status" value="1"/>
</dbReference>
<dbReference type="InterPro" id="IPR004812">
    <property type="entry name" value="Efflux_drug-R_Bcr/CmlA"/>
</dbReference>
<dbReference type="InterPro" id="IPR011701">
    <property type="entry name" value="MFS"/>
</dbReference>
<dbReference type="InterPro" id="IPR020846">
    <property type="entry name" value="MFS_dom"/>
</dbReference>
<dbReference type="InterPro" id="IPR036259">
    <property type="entry name" value="MFS_trans_sf"/>
</dbReference>
<dbReference type="NCBIfam" id="TIGR00710">
    <property type="entry name" value="efflux_Bcr_CflA"/>
    <property type="match status" value="1"/>
</dbReference>
<dbReference type="PANTHER" id="PTHR23502">
    <property type="entry name" value="MAJOR FACILITATOR SUPERFAMILY"/>
    <property type="match status" value="1"/>
</dbReference>
<dbReference type="PANTHER" id="PTHR23502:SF132">
    <property type="entry name" value="POLYAMINE TRANSPORTER 2-RELATED"/>
    <property type="match status" value="1"/>
</dbReference>
<dbReference type="Pfam" id="PF07690">
    <property type="entry name" value="MFS_1"/>
    <property type="match status" value="1"/>
</dbReference>
<dbReference type="SUPFAM" id="SSF103473">
    <property type="entry name" value="MFS general substrate transporter"/>
    <property type="match status" value="1"/>
</dbReference>
<dbReference type="PROSITE" id="PS50850">
    <property type="entry name" value="MFS"/>
    <property type="match status" value="1"/>
</dbReference>
<evidence type="ECO:0000255" key="1"/>
<evidence type="ECO:0000305" key="2"/>
<keyword id="KW-1003">Cell membrane</keyword>
<keyword id="KW-0472">Membrane</keyword>
<keyword id="KW-1185">Reference proteome</keyword>
<keyword id="KW-0812">Transmembrane</keyword>
<keyword id="KW-1133">Transmembrane helix</keyword>
<keyword id="KW-0813">Transport</keyword>
<gene>
    <name type="primary">ydgK</name>
    <name type="ordered locus">BSU05680</name>
</gene>
<reference key="1">
    <citation type="submission" date="1997-03" db="EMBL/GenBank/DDBJ databases">
        <title>A 148 kbp sequence of the region between 35 and 47 degree of the Bacillus subtilis genome.</title>
        <authorList>
            <person name="Kasahara Y."/>
            <person name="Nakai S."/>
            <person name="Lee S."/>
            <person name="Sadaie Y."/>
            <person name="Ogasawara N."/>
        </authorList>
    </citation>
    <scope>NUCLEOTIDE SEQUENCE [GENOMIC DNA]</scope>
    <source>
        <strain>168</strain>
    </source>
</reference>
<reference key="2">
    <citation type="journal article" date="1997" name="Nature">
        <title>The complete genome sequence of the Gram-positive bacterium Bacillus subtilis.</title>
        <authorList>
            <person name="Kunst F."/>
            <person name="Ogasawara N."/>
            <person name="Moszer I."/>
            <person name="Albertini A.M."/>
            <person name="Alloni G."/>
            <person name="Azevedo V."/>
            <person name="Bertero M.G."/>
            <person name="Bessieres P."/>
            <person name="Bolotin A."/>
            <person name="Borchert S."/>
            <person name="Borriss R."/>
            <person name="Boursier L."/>
            <person name="Brans A."/>
            <person name="Braun M."/>
            <person name="Brignell S.C."/>
            <person name="Bron S."/>
            <person name="Brouillet S."/>
            <person name="Bruschi C.V."/>
            <person name="Caldwell B."/>
            <person name="Capuano V."/>
            <person name="Carter N.M."/>
            <person name="Choi S.-K."/>
            <person name="Codani J.-J."/>
            <person name="Connerton I.F."/>
            <person name="Cummings N.J."/>
            <person name="Daniel R.A."/>
            <person name="Denizot F."/>
            <person name="Devine K.M."/>
            <person name="Duesterhoeft A."/>
            <person name="Ehrlich S.D."/>
            <person name="Emmerson P.T."/>
            <person name="Entian K.-D."/>
            <person name="Errington J."/>
            <person name="Fabret C."/>
            <person name="Ferrari E."/>
            <person name="Foulger D."/>
            <person name="Fritz C."/>
            <person name="Fujita M."/>
            <person name="Fujita Y."/>
            <person name="Fuma S."/>
            <person name="Galizzi A."/>
            <person name="Galleron N."/>
            <person name="Ghim S.-Y."/>
            <person name="Glaser P."/>
            <person name="Goffeau A."/>
            <person name="Golightly E.J."/>
            <person name="Grandi G."/>
            <person name="Guiseppi G."/>
            <person name="Guy B.J."/>
            <person name="Haga K."/>
            <person name="Haiech J."/>
            <person name="Harwood C.R."/>
            <person name="Henaut A."/>
            <person name="Hilbert H."/>
            <person name="Holsappel S."/>
            <person name="Hosono S."/>
            <person name="Hullo M.-F."/>
            <person name="Itaya M."/>
            <person name="Jones L.-M."/>
            <person name="Joris B."/>
            <person name="Karamata D."/>
            <person name="Kasahara Y."/>
            <person name="Klaerr-Blanchard M."/>
            <person name="Klein C."/>
            <person name="Kobayashi Y."/>
            <person name="Koetter P."/>
            <person name="Koningstein G."/>
            <person name="Krogh S."/>
            <person name="Kumano M."/>
            <person name="Kurita K."/>
            <person name="Lapidus A."/>
            <person name="Lardinois S."/>
            <person name="Lauber J."/>
            <person name="Lazarevic V."/>
            <person name="Lee S.-M."/>
            <person name="Levine A."/>
            <person name="Liu H."/>
            <person name="Masuda S."/>
            <person name="Mauel C."/>
            <person name="Medigue C."/>
            <person name="Medina N."/>
            <person name="Mellado R.P."/>
            <person name="Mizuno M."/>
            <person name="Moestl D."/>
            <person name="Nakai S."/>
            <person name="Noback M."/>
            <person name="Noone D."/>
            <person name="O'Reilly M."/>
            <person name="Ogawa K."/>
            <person name="Ogiwara A."/>
            <person name="Oudega B."/>
            <person name="Park S.-H."/>
            <person name="Parro V."/>
            <person name="Pohl T.M."/>
            <person name="Portetelle D."/>
            <person name="Porwollik S."/>
            <person name="Prescott A.M."/>
            <person name="Presecan E."/>
            <person name="Pujic P."/>
            <person name="Purnelle B."/>
            <person name="Rapoport G."/>
            <person name="Rey M."/>
            <person name="Reynolds S."/>
            <person name="Rieger M."/>
            <person name="Rivolta C."/>
            <person name="Rocha E."/>
            <person name="Roche B."/>
            <person name="Rose M."/>
            <person name="Sadaie Y."/>
            <person name="Sato T."/>
            <person name="Scanlan E."/>
            <person name="Schleich S."/>
            <person name="Schroeter R."/>
            <person name="Scoffone F."/>
            <person name="Sekiguchi J."/>
            <person name="Sekowska A."/>
            <person name="Seror S.J."/>
            <person name="Serror P."/>
            <person name="Shin B.-S."/>
            <person name="Soldo B."/>
            <person name="Sorokin A."/>
            <person name="Tacconi E."/>
            <person name="Takagi T."/>
            <person name="Takahashi H."/>
            <person name="Takemaru K."/>
            <person name="Takeuchi M."/>
            <person name="Tamakoshi A."/>
            <person name="Tanaka T."/>
            <person name="Terpstra P."/>
            <person name="Tognoni A."/>
            <person name="Tosato V."/>
            <person name="Uchiyama S."/>
            <person name="Vandenbol M."/>
            <person name="Vannier F."/>
            <person name="Vassarotti A."/>
            <person name="Viari A."/>
            <person name="Wambutt R."/>
            <person name="Wedler E."/>
            <person name="Wedler H."/>
            <person name="Weitzenegger T."/>
            <person name="Winters P."/>
            <person name="Wipat A."/>
            <person name="Yamamoto H."/>
            <person name="Yamane K."/>
            <person name="Yasumoto K."/>
            <person name="Yata K."/>
            <person name="Yoshida K."/>
            <person name="Yoshikawa H.-F."/>
            <person name="Zumstein E."/>
            <person name="Yoshikawa H."/>
            <person name="Danchin A."/>
        </authorList>
    </citation>
    <scope>NUCLEOTIDE SEQUENCE [LARGE SCALE GENOMIC DNA]</scope>
    <source>
        <strain>168</strain>
    </source>
</reference>
<reference key="3">
    <citation type="journal article" date="1997" name="Microbiology">
        <title>Nucleotide sequence and analysis of the phoB-rrnE-groESL region of the Bacillus subtilis chromosome.</title>
        <authorList>
            <person name="Sadaie Y."/>
            <person name="Yata K."/>
            <person name="Fujita M."/>
            <person name="Sagai H."/>
            <person name="Itaya M."/>
            <person name="Kasahara Y."/>
            <person name="Ogasawara N."/>
        </authorList>
    </citation>
    <scope>NUCLEOTIDE SEQUENCE [GENOMIC DNA] OF 116-402</scope>
    <source>
        <strain>168 / JH642</strain>
    </source>
</reference>